<evidence type="ECO:0000255" key="1">
    <source>
        <dbReference type="HAMAP-Rule" id="MF_01031"/>
    </source>
</evidence>
<feature type="chain" id="PRO_1000084256" description="3-isopropylmalate dehydratase small subunit">
    <location>
        <begin position="1"/>
        <end position="216"/>
    </location>
</feature>
<keyword id="KW-0028">Amino-acid biosynthesis</keyword>
<keyword id="KW-0100">Branched-chain amino acid biosynthesis</keyword>
<keyword id="KW-0432">Leucine biosynthesis</keyword>
<keyword id="KW-0456">Lyase</keyword>
<gene>
    <name evidence="1" type="primary">leuD</name>
    <name type="ordered locus">Mmwyl1_2092</name>
</gene>
<organism>
    <name type="scientific">Marinomonas sp. (strain MWYL1)</name>
    <dbReference type="NCBI Taxonomy" id="400668"/>
    <lineage>
        <taxon>Bacteria</taxon>
        <taxon>Pseudomonadati</taxon>
        <taxon>Pseudomonadota</taxon>
        <taxon>Gammaproteobacteria</taxon>
        <taxon>Oceanospirillales</taxon>
        <taxon>Oceanospirillaceae</taxon>
        <taxon>Marinomonas</taxon>
    </lineage>
</organism>
<proteinExistence type="inferred from homology"/>
<sequence>MRPFTKHTGLAAPLDLANVDTDMIIPKQFLKSIKRTGFGKNLFDELRYEDEGQPDQECDGRPLRKDFVLNQDRYKGASVLLARQNFGCGSSREHAPWALDDYGFRSIIAPSFADIFYNNCFKNGLLPIVLQAEEVDQLFAEVALREGAQVIVDLENQTVSSPSGATFEFNVDNFRKHCLLNGLDDIGLTLQQDAAIRRYEEKRMNDAPWLFLPRGQ</sequence>
<name>LEUD_MARMS</name>
<protein>
    <recommendedName>
        <fullName evidence="1">3-isopropylmalate dehydratase small subunit</fullName>
        <ecNumber evidence="1">4.2.1.33</ecNumber>
    </recommendedName>
    <alternativeName>
        <fullName evidence="1">Alpha-IPM isomerase</fullName>
        <shortName evidence="1">IPMI</shortName>
    </alternativeName>
    <alternativeName>
        <fullName evidence="1">Isopropylmalate isomerase</fullName>
    </alternativeName>
</protein>
<comment type="function">
    <text evidence="1">Catalyzes the isomerization between 2-isopropylmalate and 3-isopropylmalate, via the formation of 2-isopropylmaleate.</text>
</comment>
<comment type="catalytic activity">
    <reaction evidence="1">
        <text>(2R,3S)-3-isopropylmalate = (2S)-2-isopropylmalate</text>
        <dbReference type="Rhea" id="RHEA:32287"/>
        <dbReference type="ChEBI" id="CHEBI:1178"/>
        <dbReference type="ChEBI" id="CHEBI:35121"/>
        <dbReference type="EC" id="4.2.1.33"/>
    </reaction>
</comment>
<comment type="pathway">
    <text evidence="1">Amino-acid biosynthesis; L-leucine biosynthesis; L-leucine from 3-methyl-2-oxobutanoate: step 2/4.</text>
</comment>
<comment type="subunit">
    <text evidence="1">Heterodimer of LeuC and LeuD.</text>
</comment>
<comment type="similarity">
    <text evidence="1">Belongs to the LeuD family. LeuD type 1 subfamily.</text>
</comment>
<accession>A6VX35</accession>
<dbReference type="EC" id="4.2.1.33" evidence="1"/>
<dbReference type="EMBL" id="CP000749">
    <property type="protein sequence ID" value="ABR71014.1"/>
    <property type="molecule type" value="Genomic_DNA"/>
</dbReference>
<dbReference type="SMR" id="A6VX35"/>
<dbReference type="STRING" id="400668.Mmwyl1_2092"/>
<dbReference type="KEGG" id="mmw:Mmwyl1_2092"/>
<dbReference type="eggNOG" id="COG0066">
    <property type="taxonomic scope" value="Bacteria"/>
</dbReference>
<dbReference type="HOGENOM" id="CLU_081378_0_3_6"/>
<dbReference type="OrthoDB" id="9777465at2"/>
<dbReference type="UniPathway" id="UPA00048">
    <property type="reaction ID" value="UER00071"/>
</dbReference>
<dbReference type="GO" id="GO:0009316">
    <property type="term" value="C:3-isopropylmalate dehydratase complex"/>
    <property type="evidence" value="ECO:0007669"/>
    <property type="project" value="InterPro"/>
</dbReference>
<dbReference type="GO" id="GO:0003861">
    <property type="term" value="F:3-isopropylmalate dehydratase activity"/>
    <property type="evidence" value="ECO:0007669"/>
    <property type="project" value="UniProtKB-UniRule"/>
</dbReference>
<dbReference type="GO" id="GO:0009098">
    <property type="term" value="P:L-leucine biosynthetic process"/>
    <property type="evidence" value="ECO:0007669"/>
    <property type="project" value="UniProtKB-UniRule"/>
</dbReference>
<dbReference type="CDD" id="cd01577">
    <property type="entry name" value="IPMI_Swivel"/>
    <property type="match status" value="1"/>
</dbReference>
<dbReference type="FunFam" id="3.20.19.10:FF:000003">
    <property type="entry name" value="3-isopropylmalate dehydratase small subunit"/>
    <property type="match status" value="1"/>
</dbReference>
<dbReference type="Gene3D" id="3.20.19.10">
    <property type="entry name" value="Aconitase, domain 4"/>
    <property type="match status" value="1"/>
</dbReference>
<dbReference type="HAMAP" id="MF_01031">
    <property type="entry name" value="LeuD_type1"/>
    <property type="match status" value="1"/>
</dbReference>
<dbReference type="InterPro" id="IPR004431">
    <property type="entry name" value="3-IsopropMal_deHydase_ssu"/>
</dbReference>
<dbReference type="InterPro" id="IPR015928">
    <property type="entry name" value="Aconitase/3IPM_dehydase_swvl"/>
</dbReference>
<dbReference type="InterPro" id="IPR000573">
    <property type="entry name" value="AconitaseA/IPMdHydase_ssu_swvl"/>
</dbReference>
<dbReference type="InterPro" id="IPR033940">
    <property type="entry name" value="IPMI_Swivel"/>
</dbReference>
<dbReference type="InterPro" id="IPR050075">
    <property type="entry name" value="LeuD"/>
</dbReference>
<dbReference type="NCBIfam" id="TIGR00171">
    <property type="entry name" value="leuD"/>
    <property type="match status" value="1"/>
</dbReference>
<dbReference type="NCBIfam" id="NF002458">
    <property type="entry name" value="PRK01641.1"/>
    <property type="match status" value="1"/>
</dbReference>
<dbReference type="PANTHER" id="PTHR43345:SF5">
    <property type="entry name" value="3-ISOPROPYLMALATE DEHYDRATASE SMALL SUBUNIT"/>
    <property type="match status" value="1"/>
</dbReference>
<dbReference type="PANTHER" id="PTHR43345">
    <property type="entry name" value="3-ISOPROPYLMALATE DEHYDRATASE SMALL SUBUNIT 2-RELATED-RELATED"/>
    <property type="match status" value="1"/>
</dbReference>
<dbReference type="Pfam" id="PF00694">
    <property type="entry name" value="Aconitase_C"/>
    <property type="match status" value="1"/>
</dbReference>
<dbReference type="SUPFAM" id="SSF52016">
    <property type="entry name" value="LeuD/IlvD-like"/>
    <property type="match status" value="1"/>
</dbReference>
<reference key="1">
    <citation type="submission" date="2007-06" db="EMBL/GenBank/DDBJ databases">
        <title>Complete sequence of Marinomonas sp. MWYL1.</title>
        <authorList>
            <consortium name="US DOE Joint Genome Institute"/>
            <person name="Copeland A."/>
            <person name="Lucas S."/>
            <person name="Lapidus A."/>
            <person name="Barry K."/>
            <person name="Glavina del Rio T."/>
            <person name="Dalin E."/>
            <person name="Tice H."/>
            <person name="Pitluck S."/>
            <person name="Kiss H."/>
            <person name="Brettin T."/>
            <person name="Bruce D."/>
            <person name="Detter J.C."/>
            <person name="Han C."/>
            <person name="Schmutz J."/>
            <person name="Larimer F."/>
            <person name="Land M."/>
            <person name="Hauser L."/>
            <person name="Kyrpides N."/>
            <person name="Kim E."/>
            <person name="Johnston A.W.B."/>
            <person name="Todd J.D."/>
            <person name="Rogers R."/>
            <person name="Wexler M."/>
            <person name="Bond P.L."/>
            <person name="Li Y."/>
            <person name="Richardson P."/>
        </authorList>
    </citation>
    <scope>NUCLEOTIDE SEQUENCE [LARGE SCALE GENOMIC DNA]</scope>
    <source>
        <strain>MWYL1</strain>
    </source>
</reference>